<comment type="function">
    <text evidence="1">Involved in the biosynthesis of branched-chain amino acids (BCAA). Catalyzes an alkyl-migration followed by a ketol-acid reduction of (S)-2-acetolactate (S2AL) to yield (R)-2,3-dihydroxy-isovalerate. In the isomerase reaction, S2AL is rearranged via a Mg-dependent methyl migration to produce 3-hydroxy-3-methyl-2-ketobutyrate (HMKB). In the reductase reaction, this 2-ketoacid undergoes a metal-dependent reduction by NADPH to yield (R)-2,3-dihydroxy-isovalerate.</text>
</comment>
<comment type="catalytic activity">
    <reaction evidence="1">
        <text>(2R)-2,3-dihydroxy-3-methylbutanoate + NADP(+) = (2S)-2-acetolactate + NADPH + H(+)</text>
        <dbReference type="Rhea" id="RHEA:22068"/>
        <dbReference type="ChEBI" id="CHEBI:15378"/>
        <dbReference type="ChEBI" id="CHEBI:49072"/>
        <dbReference type="ChEBI" id="CHEBI:57783"/>
        <dbReference type="ChEBI" id="CHEBI:58349"/>
        <dbReference type="ChEBI" id="CHEBI:58476"/>
        <dbReference type="EC" id="1.1.1.86"/>
    </reaction>
</comment>
<comment type="catalytic activity">
    <reaction evidence="1">
        <text>(2R,3R)-2,3-dihydroxy-3-methylpentanoate + NADP(+) = (S)-2-ethyl-2-hydroxy-3-oxobutanoate + NADPH + H(+)</text>
        <dbReference type="Rhea" id="RHEA:13493"/>
        <dbReference type="ChEBI" id="CHEBI:15378"/>
        <dbReference type="ChEBI" id="CHEBI:49256"/>
        <dbReference type="ChEBI" id="CHEBI:49258"/>
        <dbReference type="ChEBI" id="CHEBI:57783"/>
        <dbReference type="ChEBI" id="CHEBI:58349"/>
        <dbReference type="EC" id="1.1.1.86"/>
    </reaction>
</comment>
<comment type="cofactor">
    <cofactor evidence="1">
        <name>Mg(2+)</name>
        <dbReference type="ChEBI" id="CHEBI:18420"/>
    </cofactor>
    <text evidence="1">Binds 2 magnesium ions per subunit.</text>
</comment>
<comment type="pathway">
    <text evidence="1">Amino-acid biosynthesis; L-isoleucine biosynthesis; L-isoleucine from 2-oxobutanoate: step 2/4.</text>
</comment>
<comment type="pathway">
    <text evidence="1">Amino-acid biosynthesis; L-valine biosynthesis; L-valine from pyruvate: step 2/4.</text>
</comment>
<comment type="similarity">
    <text evidence="1">Belongs to the ketol-acid reductoisomerase family.</text>
</comment>
<feature type="chain" id="PRO_1000190932" description="Ketol-acid reductoisomerase (NADP(+))">
    <location>
        <begin position="1"/>
        <end position="338"/>
    </location>
</feature>
<feature type="domain" description="KARI N-terminal Rossmann" evidence="2">
    <location>
        <begin position="1"/>
        <end position="181"/>
    </location>
</feature>
<feature type="domain" description="KARI C-terminal knotted" evidence="3">
    <location>
        <begin position="182"/>
        <end position="327"/>
    </location>
</feature>
<feature type="active site" evidence="1">
    <location>
        <position position="107"/>
    </location>
</feature>
<feature type="binding site" evidence="1">
    <location>
        <begin position="24"/>
        <end position="27"/>
    </location>
    <ligand>
        <name>NADP(+)</name>
        <dbReference type="ChEBI" id="CHEBI:58349"/>
    </ligand>
</feature>
<feature type="binding site" evidence="1">
    <location>
        <position position="47"/>
    </location>
    <ligand>
        <name>NADP(+)</name>
        <dbReference type="ChEBI" id="CHEBI:58349"/>
    </ligand>
</feature>
<feature type="binding site" evidence="1">
    <location>
        <position position="50"/>
    </location>
    <ligand>
        <name>NADP(+)</name>
        <dbReference type="ChEBI" id="CHEBI:58349"/>
    </ligand>
</feature>
<feature type="binding site" evidence="1">
    <location>
        <position position="52"/>
    </location>
    <ligand>
        <name>NADP(+)</name>
        <dbReference type="ChEBI" id="CHEBI:58349"/>
    </ligand>
</feature>
<feature type="binding site" evidence="1">
    <location>
        <begin position="82"/>
        <end position="85"/>
    </location>
    <ligand>
        <name>NADP(+)</name>
        <dbReference type="ChEBI" id="CHEBI:58349"/>
    </ligand>
</feature>
<feature type="binding site" evidence="1">
    <location>
        <position position="133"/>
    </location>
    <ligand>
        <name>NADP(+)</name>
        <dbReference type="ChEBI" id="CHEBI:58349"/>
    </ligand>
</feature>
<feature type="binding site" evidence="1">
    <location>
        <position position="190"/>
    </location>
    <ligand>
        <name>Mg(2+)</name>
        <dbReference type="ChEBI" id="CHEBI:18420"/>
        <label>1</label>
    </ligand>
</feature>
<feature type="binding site" evidence="1">
    <location>
        <position position="190"/>
    </location>
    <ligand>
        <name>Mg(2+)</name>
        <dbReference type="ChEBI" id="CHEBI:18420"/>
        <label>2</label>
    </ligand>
</feature>
<feature type="binding site" evidence="1">
    <location>
        <position position="194"/>
    </location>
    <ligand>
        <name>Mg(2+)</name>
        <dbReference type="ChEBI" id="CHEBI:18420"/>
        <label>1</label>
    </ligand>
</feature>
<feature type="binding site" evidence="1">
    <location>
        <position position="226"/>
    </location>
    <ligand>
        <name>Mg(2+)</name>
        <dbReference type="ChEBI" id="CHEBI:18420"/>
        <label>2</label>
    </ligand>
</feature>
<feature type="binding site" evidence="1">
    <location>
        <position position="230"/>
    </location>
    <ligand>
        <name>Mg(2+)</name>
        <dbReference type="ChEBI" id="CHEBI:18420"/>
        <label>2</label>
    </ligand>
</feature>
<feature type="binding site" evidence="1">
    <location>
        <position position="251"/>
    </location>
    <ligand>
        <name>substrate</name>
    </ligand>
</feature>
<keyword id="KW-0028">Amino-acid biosynthesis</keyword>
<keyword id="KW-0100">Branched-chain amino acid biosynthesis</keyword>
<keyword id="KW-0460">Magnesium</keyword>
<keyword id="KW-0479">Metal-binding</keyword>
<keyword id="KW-0521">NADP</keyword>
<keyword id="KW-0560">Oxidoreductase</keyword>
<keyword id="KW-1185">Reference proteome</keyword>
<dbReference type="EC" id="1.1.1.86" evidence="1"/>
<dbReference type="EMBL" id="CP001100">
    <property type="protein sequence ID" value="ACF14087.1"/>
    <property type="molecule type" value="Genomic_DNA"/>
</dbReference>
<dbReference type="RefSeq" id="WP_012500171.1">
    <property type="nucleotide sequence ID" value="NC_011026.1"/>
</dbReference>
<dbReference type="SMR" id="B3QSP0"/>
<dbReference type="STRING" id="517418.Ctha_1629"/>
<dbReference type="KEGG" id="cts:Ctha_1629"/>
<dbReference type="eggNOG" id="COG0059">
    <property type="taxonomic scope" value="Bacteria"/>
</dbReference>
<dbReference type="HOGENOM" id="CLU_033821_0_1_10"/>
<dbReference type="OrthoDB" id="9804088at2"/>
<dbReference type="UniPathway" id="UPA00047">
    <property type="reaction ID" value="UER00056"/>
</dbReference>
<dbReference type="UniPathway" id="UPA00049">
    <property type="reaction ID" value="UER00060"/>
</dbReference>
<dbReference type="Proteomes" id="UP000001208">
    <property type="component" value="Chromosome"/>
</dbReference>
<dbReference type="GO" id="GO:0005829">
    <property type="term" value="C:cytosol"/>
    <property type="evidence" value="ECO:0007669"/>
    <property type="project" value="TreeGrafter"/>
</dbReference>
<dbReference type="GO" id="GO:0004455">
    <property type="term" value="F:ketol-acid reductoisomerase activity"/>
    <property type="evidence" value="ECO:0007669"/>
    <property type="project" value="UniProtKB-UniRule"/>
</dbReference>
<dbReference type="GO" id="GO:0000287">
    <property type="term" value="F:magnesium ion binding"/>
    <property type="evidence" value="ECO:0007669"/>
    <property type="project" value="UniProtKB-UniRule"/>
</dbReference>
<dbReference type="GO" id="GO:0050661">
    <property type="term" value="F:NADP binding"/>
    <property type="evidence" value="ECO:0007669"/>
    <property type="project" value="InterPro"/>
</dbReference>
<dbReference type="GO" id="GO:0009097">
    <property type="term" value="P:isoleucine biosynthetic process"/>
    <property type="evidence" value="ECO:0007669"/>
    <property type="project" value="UniProtKB-UniRule"/>
</dbReference>
<dbReference type="GO" id="GO:0009099">
    <property type="term" value="P:L-valine biosynthetic process"/>
    <property type="evidence" value="ECO:0007669"/>
    <property type="project" value="UniProtKB-UniRule"/>
</dbReference>
<dbReference type="FunFam" id="3.40.50.720:FF:000023">
    <property type="entry name" value="Ketol-acid reductoisomerase (NADP(+))"/>
    <property type="match status" value="1"/>
</dbReference>
<dbReference type="Gene3D" id="6.10.240.10">
    <property type="match status" value="1"/>
</dbReference>
<dbReference type="Gene3D" id="3.40.50.720">
    <property type="entry name" value="NAD(P)-binding Rossmann-like Domain"/>
    <property type="match status" value="1"/>
</dbReference>
<dbReference type="HAMAP" id="MF_00435">
    <property type="entry name" value="IlvC"/>
    <property type="match status" value="1"/>
</dbReference>
<dbReference type="InterPro" id="IPR008927">
    <property type="entry name" value="6-PGluconate_DH-like_C_sf"/>
</dbReference>
<dbReference type="InterPro" id="IPR013023">
    <property type="entry name" value="KARI"/>
</dbReference>
<dbReference type="InterPro" id="IPR000506">
    <property type="entry name" value="KARI_C"/>
</dbReference>
<dbReference type="InterPro" id="IPR013116">
    <property type="entry name" value="KARI_N"/>
</dbReference>
<dbReference type="InterPro" id="IPR014359">
    <property type="entry name" value="KARI_prok"/>
</dbReference>
<dbReference type="InterPro" id="IPR036291">
    <property type="entry name" value="NAD(P)-bd_dom_sf"/>
</dbReference>
<dbReference type="NCBIfam" id="TIGR00465">
    <property type="entry name" value="ilvC"/>
    <property type="match status" value="1"/>
</dbReference>
<dbReference type="NCBIfam" id="NF004017">
    <property type="entry name" value="PRK05479.1"/>
    <property type="match status" value="1"/>
</dbReference>
<dbReference type="NCBIfam" id="NF009940">
    <property type="entry name" value="PRK13403.1"/>
    <property type="match status" value="1"/>
</dbReference>
<dbReference type="PANTHER" id="PTHR21371">
    <property type="entry name" value="KETOL-ACID REDUCTOISOMERASE, MITOCHONDRIAL"/>
    <property type="match status" value="1"/>
</dbReference>
<dbReference type="PANTHER" id="PTHR21371:SF1">
    <property type="entry name" value="KETOL-ACID REDUCTOISOMERASE, MITOCHONDRIAL"/>
    <property type="match status" value="1"/>
</dbReference>
<dbReference type="Pfam" id="PF01450">
    <property type="entry name" value="KARI_C"/>
    <property type="match status" value="1"/>
</dbReference>
<dbReference type="Pfam" id="PF07991">
    <property type="entry name" value="KARI_N"/>
    <property type="match status" value="1"/>
</dbReference>
<dbReference type="PIRSF" id="PIRSF000116">
    <property type="entry name" value="IlvC_gammaproteo"/>
    <property type="match status" value="1"/>
</dbReference>
<dbReference type="SUPFAM" id="SSF48179">
    <property type="entry name" value="6-phosphogluconate dehydrogenase C-terminal domain-like"/>
    <property type="match status" value="1"/>
</dbReference>
<dbReference type="SUPFAM" id="SSF51735">
    <property type="entry name" value="NAD(P)-binding Rossmann-fold domains"/>
    <property type="match status" value="1"/>
</dbReference>
<dbReference type="PROSITE" id="PS51851">
    <property type="entry name" value="KARI_C"/>
    <property type="match status" value="1"/>
</dbReference>
<dbReference type="PROSITE" id="PS51850">
    <property type="entry name" value="KARI_N"/>
    <property type="match status" value="1"/>
</dbReference>
<evidence type="ECO:0000255" key="1">
    <source>
        <dbReference type="HAMAP-Rule" id="MF_00435"/>
    </source>
</evidence>
<evidence type="ECO:0000255" key="2">
    <source>
        <dbReference type="PROSITE-ProRule" id="PRU01197"/>
    </source>
</evidence>
<evidence type="ECO:0000255" key="3">
    <source>
        <dbReference type="PROSITE-ProRule" id="PRU01198"/>
    </source>
</evidence>
<protein>
    <recommendedName>
        <fullName evidence="1">Ketol-acid reductoisomerase (NADP(+))</fullName>
        <shortName evidence="1">KARI</shortName>
        <ecNumber evidence="1">1.1.1.86</ecNumber>
    </recommendedName>
    <alternativeName>
        <fullName evidence="1">Acetohydroxy-acid isomeroreductase</fullName>
        <shortName evidence="1">AHIR</shortName>
    </alternativeName>
    <alternativeName>
        <fullName evidence="1">Alpha-keto-beta-hydroxylacyl reductoisomerase</fullName>
    </alternativeName>
    <alternativeName>
        <fullName evidence="1">Ketol-acid reductoisomerase type 1</fullName>
    </alternativeName>
    <alternativeName>
        <fullName evidence="1">Ketol-acid reductoisomerase type I</fullName>
    </alternativeName>
</protein>
<gene>
    <name evidence="1" type="primary">ilvC</name>
    <name type="ordered locus">Ctha_1629</name>
</gene>
<accession>B3QSP0</accession>
<sequence>MKVYYENDADLALLADKKIAVLGFGSQGHAHALNLKDSGMNVCVGLKENSASWVKAEKAGLMVEKTAEAVKWADIIMVLIPDQVQKAVYENDIAPNLKPGDTLAFGHGFNIHYKQIVPPANVNVIMIAPKSPGHLVRRTFVEGAGVPCLIAVHQNVDGKAKDIALAWAKGLGGTKAGVIETNFKDETETDLFGEQAVLCGGSAELIKAGFDTLVEGGYPAELAYFECMHELKLIVDLYYEGGLSRMNYSVSDTAEYGGMTRGPRIITDEVRQNMRQVLKEVQDGTFAKEFIDECNSGYKSMEALRKSNREHKIEGVGEKLRGMMSWLFKKNPKADAGV</sequence>
<organism>
    <name type="scientific">Chloroherpeton thalassium (strain ATCC 35110 / GB-78)</name>
    <dbReference type="NCBI Taxonomy" id="517418"/>
    <lineage>
        <taxon>Bacteria</taxon>
        <taxon>Pseudomonadati</taxon>
        <taxon>Chlorobiota</taxon>
        <taxon>Chlorobiia</taxon>
        <taxon>Chlorobiales</taxon>
        <taxon>Chloroherpetonaceae</taxon>
        <taxon>Chloroherpeton</taxon>
    </lineage>
</organism>
<name>ILVC_CHLT3</name>
<proteinExistence type="inferred from homology"/>
<reference key="1">
    <citation type="submission" date="2008-06" db="EMBL/GenBank/DDBJ databases">
        <title>Complete sequence of Chloroherpeton thalassium ATCC 35110.</title>
        <authorList>
            <consortium name="US DOE Joint Genome Institute"/>
            <person name="Lucas S."/>
            <person name="Copeland A."/>
            <person name="Lapidus A."/>
            <person name="Glavina del Rio T."/>
            <person name="Dalin E."/>
            <person name="Tice H."/>
            <person name="Bruce D."/>
            <person name="Goodwin L."/>
            <person name="Pitluck S."/>
            <person name="Schmutz J."/>
            <person name="Larimer F."/>
            <person name="Land M."/>
            <person name="Hauser L."/>
            <person name="Kyrpides N."/>
            <person name="Mikhailova N."/>
            <person name="Liu Z."/>
            <person name="Li T."/>
            <person name="Zhao F."/>
            <person name="Overmann J."/>
            <person name="Bryant D.A."/>
            <person name="Richardson P."/>
        </authorList>
    </citation>
    <scope>NUCLEOTIDE SEQUENCE [LARGE SCALE GENOMIC DNA]</scope>
    <source>
        <strain>ATCC 35110 / GB-78</strain>
    </source>
</reference>